<comment type="function">
    <text evidence="1">Cell wall formation. Adds enolpyruvyl to UDP-N-acetylglucosamine.</text>
</comment>
<comment type="catalytic activity">
    <reaction evidence="1">
        <text>phosphoenolpyruvate + UDP-N-acetyl-alpha-D-glucosamine = UDP-N-acetyl-3-O-(1-carboxyvinyl)-alpha-D-glucosamine + phosphate</text>
        <dbReference type="Rhea" id="RHEA:18681"/>
        <dbReference type="ChEBI" id="CHEBI:43474"/>
        <dbReference type="ChEBI" id="CHEBI:57705"/>
        <dbReference type="ChEBI" id="CHEBI:58702"/>
        <dbReference type="ChEBI" id="CHEBI:68483"/>
        <dbReference type="EC" id="2.5.1.7"/>
    </reaction>
</comment>
<comment type="pathway">
    <text evidence="1">Cell wall biogenesis; peptidoglycan biosynthesis.</text>
</comment>
<comment type="subcellular location">
    <subcellularLocation>
        <location evidence="1">Cytoplasm</location>
    </subcellularLocation>
</comment>
<comment type="similarity">
    <text evidence="1">Belongs to the EPSP synthase family. MurA subfamily.</text>
</comment>
<organism>
    <name type="scientific">Coxiella burnetii (strain CbuG_Q212)</name>
    <name type="common">Coxiella burnetii (strain Q212)</name>
    <dbReference type="NCBI Taxonomy" id="434923"/>
    <lineage>
        <taxon>Bacteria</taxon>
        <taxon>Pseudomonadati</taxon>
        <taxon>Pseudomonadota</taxon>
        <taxon>Gammaproteobacteria</taxon>
        <taxon>Legionellales</taxon>
        <taxon>Coxiellaceae</taxon>
        <taxon>Coxiella</taxon>
    </lineage>
</organism>
<gene>
    <name evidence="1" type="primary">murA</name>
    <name type="ordered locus">CbuG_1252</name>
</gene>
<name>MURA_COXB2</name>
<dbReference type="EC" id="2.5.1.7" evidence="1"/>
<dbReference type="EMBL" id="CP001019">
    <property type="protein sequence ID" value="ACJ18575.1"/>
    <property type="molecule type" value="Genomic_DNA"/>
</dbReference>
<dbReference type="RefSeq" id="WP_005771755.1">
    <property type="nucleotide sequence ID" value="NC_011527.1"/>
</dbReference>
<dbReference type="SMR" id="B6J0U7"/>
<dbReference type="KEGG" id="cbg:CbuG_1252"/>
<dbReference type="HOGENOM" id="CLU_027387_0_0_6"/>
<dbReference type="UniPathway" id="UPA00219"/>
<dbReference type="GO" id="GO:0005737">
    <property type="term" value="C:cytoplasm"/>
    <property type="evidence" value="ECO:0007669"/>
    <property type="project" value="UniProtKB-SubCell"/>
</dbReference>
<dbReference type="GO" id="GO:0008760">
    <property type="term" value="F:UDP-N-acetylglucosamine 1-carboxyvinyltransferase activity"/>
    <property type="evidence" value="ECO:0007669"/>
    <property type="project" value="UniProtKB-UniRule"/>
</dbReference>
<dbReference type="GO" id="GO:0051301">
    <property type="term" value="P:cell division"/>
    <property type="evidence" value="ECO:0007669"/>
    <property type="project" value="UniProtKB-KW"/>
</dbReference>
<dbReference type="GO" id="GO:0071555">
    <property type="term" value="P:cell wall organization"/>
    <property type="evidence" value="ECO:0007669"/>
    <property type="project" value="UniProtKB-KW"/>
</dbReference>
<dbReference type="GO" id="GO:0009252">
    <property type="term" value="P:peptidoglycan biosynthetic process"/>
    <property type="evidence" value="ECO:0007669"/>
    <property type="project" value="UniProtKB-UniRule"/>
</dbReference>
<dbReference type="GO" id="GO:0008360">
    <property type="term" value="P:regulation of cell shape"/>
    <property type="evidence" value="ECO:0007669"/>
    <property type="project" value="UniProtKB-KW"/>
</dbReference>
<dbReference type="GO" id="GO:0019277">
    <property type="term" value="P:UDP-N-acetylgalactosamine biosynthetic process"/>
    <property type="evidence" value="ECO:0007669"/>
    <property type="project" value="InterPro"/>
</dbReference>
<dbReference type="CDD" id="cd01555">
    <property type="entry name" value="UdpNAET"/>
    <property type="match status" value="1"/>
</dbReference>
<dbReference type="FunFam" id="3.65.10.10:FF:000001">
    <property type="entry name" value="UDP-N-acetylglucosamine 1-carboxyvinyltransferase"/>
    <property type="match status" value="1"/>
</dbReference>
<dbReference type="FunFam" id="3.65.10.10:FF:000002">
    <property type="entry name" value="UDP-N-acetylglucosamine 1-carboxyvinyltransferase"/>
    <property type="match status" value="1"/>
</dbReference>
<dbReference type="Gene3D" id="3.65.10.10">
    <property type="entry name" value="Enolpyruvate transferase domain"/>
    <property type="match status" value="2"/>
</dbReference>
<dbReference type="HAMAP" id="MF_00111">
    <property type="entry name" value="MurA"/>
    <property type="match status" value="1"/>
</dbReference>
<dbReference type="InterPro" id="IPR001986">
    <property type="entry name" value="Enolpyruvate_Tfrase_dom"/>
</dbReference>
<dbReference type="InterPro" id="IPR036968">
    <property type="entry name" value="Enolpyruvate_Tfrase_sf"/>
</dbReference>
<dbReference type="InterPro" id="IPR050068">
    <property type="entry name" value="MurA_subfamily"/>
</dbReference>
<dbReference type="InterPro" id="IPR013792">
    <property type="entry name" value="RNA3'P_cycl/enolpyr_Trfase_a/b"/>
</dbReference>
<dbReference type="InterPro" id="IPR005750">
    <property type="entry name" value="UDP_GlcNAc_COvinyl_MurA"/>
</dbReference>
<dbReference type="NCBIfam" id="TIGR01072">
    <property type="entry name" value="murA"/>
    <property type="match status" value="1"/>
</dbReference>
<dbReference type="NCBIfam" id="NF006873">
    <property type="entry name" value="PRK09369.1"/>
    <property type="match status" value="1"/>
</dbReference>
<dbReference type="PANTHER" id="PTHR43783">
    <property type="entry name" value="UDP-N-ACETYLGLUCOSAMINE 1-CARBOXYVINYLTRANSFERASE"/>
    <property type="match status" value="1"/>
</dbReference>
<dbReference type="PANTHER" id="PTHR43783:SF1">
    <property type="entry name" value="UDP-N-ACETYLGLUCOSAMINE 1-CARBOXYVINYLTRANSFERASE"/>
    <property type="match status" value="1"/>
</dbReference>
<dbReference type="Pfam" id="PF00275">
    <property type="entry name" value="EPSP_synthase"/>
    <property type="match status" value="1"/>
</dbReference>
<dbReference type="SUPFAM" id="SSF55205">
    <property type="entry name" value="EPT/RTPC-like"/>
    <property type="match status" value="1"/>
</dbReference>
<accession>B6J0U7</accession>
<keyword id="KW-0131">Cell cycle</keyword>
<keyword id="KW-0132">Cell division</keyword>
<keyword id="KW-0133">Cell shape</keyword>
<keyword id="KW-0961">Cell wall biogenesis/degradation</keyword>
<keyword id="KW-0963">Cytoplasm</keyword>
<keyword id="KW-0573">Peptidoglycan synthesis</keyword>
<keyword id="KW-0670">Pyruvate</keyword>
<keyword id="KW-0808">Transferase</keyword>
<protein>
    <recommendedName>
        <fullName evidence="1">UDP-N-acetylglucosamine 1-carboxyvinyltransferase</fullName>
        <ecNumber evidence="1">2.5.1.7</ecNumber>
    </recommendedName>
    <alternativeName>
        <fullName evidence="1">Enoylpyruvate transferase</fullName>
    </alternativeName>
    <alternativeName>
        <fullName evidence="1">UDP-N-acetylglucosamine enolpyruvyl transferase</fullName>
        <shortName evidence="1">EPT</shortName>
    </alternativeName>
</protein>
<reference key="1">
    <citation type="journal article" date="2009" name="Infect. Immun.">
        <title>Comparative genomics reveal extensive transposon-mediated genomic plasticity and diversity among potential effector proteins within the genus Coxiella.</title>
        <authorList>
            <person name="Beare P.A."/>
            <person name="Unsworth N."/>
            <person name="Andoh M."/>
            <person name="Voth D.E."/>
            <person name="Omsland A."/>
            <person name="Gilk S.D."/>
            <person name="Williams K.P."/>
            <person name="Sobral B.W."/>
            <person name="Kupko J.J. III"/>
            <person name="Porcella S.F."/>
            <person name="Samuel J.E."/>
            <person name="Heinzen R.A."/>
        </authorList>
    </citation>
    <scope>NUCLEOTIDE SEQUENCE [LARGE SCALE GENOMIC DNA]</scope>
    <source>
        <strain>CbuG_Q212</strain>
    </source>
</reference>
<sequence length="434" mass="46762">MDKLIIVGGVPLNGSIRISGAKNAVLPILAATLLIEEPVILSNIPHLNDVTTMIELLGRMGAQITIDERMSIEVDCSQIQNVHASYELVKTMRASILVLGPLLSRFGKAEVSLPGGCAIGSRPVDVHIDGMRALGADIELVDGFIHATVEGRLKGAELNLGKITVTGTENLIMAATLAEGQTIIHNAACEPEVQDLANFLNKMGARISGAGTDTIVIDGVDRLSGGSYSILPDRIEAGTYLVAAAMTRGHVRIRDVFPKTLGAVLEKLHEAGARVKIGENWVDLDMQGRRAKAVDIVTAPYPEMPTDMQAQFMALNVVAEGQAVITETVFENRFMHVHELQRMGADIKLQGSKALIRGKEKLTGAPVMATDLRASAGLVLAGLMARGNTIVDRIYHIDRGYECIEEKLAQLGAEIRRVSSHVYAARYAAQKRWL</sequence>
<proteinExistence type="inferred from homology"/>
<feature type="chain" id="PRO_1000094684" description="UDP-N-acetylglucosamine 1-carboxyvinyltransferase">
    <location>
        <begin position="1"/>
        <end position="434"/>
    </location>
</feature>
<feature type="active site" description="Proton donor" evidence="1">
    <location>
        <position position="117"/>
    </location>
</feature>
<feature type="binding site" evidence="1">
    <location>
        <begin position="22"/>
        <end position="23"/>
    </location>
    <ligand>
        <name>phosphoenolpyruvate</name>
        <dbReference type="ChEBI" id="CHEBI:58702"/>
    </ligand>
</feature>
<feature type="binding site" evidence="1">
    <location>
        <position position="93"/>
    </location>
    <ligand>
        <name>UDP-N-acetyl-alpha-D-glucosamine</name>
        <dbReference type="ChEBI" id="CHEBI:57705"/>
    </ligand>
</feature>
<feature type="binding site" evidence="1">
    <location>
        <position position="307"/>
    </location>
    <ligand>
        <name>UDP-N-acetyl-alpha-D-glucosamine</name>
        <dbReference type="ChEBI" id="CHEBI:57705"/>
    </ligand>
</feature>
<feature type="binding site" evidence="1">
    <location>
        <position position="329"/>
    </location>
    <ligand>
        <name>UDP-N-acetyl-alpha-D-glucosamine</name>
        <dbReference type="ChEBI" id="CHEBI:57705"/>
    </ligand>
</feature>
<feature type="modified residue" description="2-(S-cysteinyl)pyruvic acid O-phosphothioketal" evidence="1">
    <location>
        <position position="117"/>
    </location>
</feature>
<evidence type="ECO:0000255" key="1">
    <source>
        <dbReference type="HAMAP-Rule" id="MF_00111"/>
    </source>
</evidence>